<dbReference type="EC" id="3.2.1.8"/>
<dbReference type="EMBL" id="DQ868502">
    <property type="protein sequence ID" value="ABI49951.1"/>
    <property type="status" value="ALT_INIT"/>
    <property type="molecule type" value="Genomic_DNA"/>
</dbReference>
<dbReference type="PIR" id="I40570">
    <property type="entry name" value="I40570"/>
</dbReference>
<dbReference type="PDB" id="1HIZ">
    <property type="method" value="X-ray"/>
    <property type="resolution" value="2.40 A"/>
    <property type="chains" value="A=29-407"/>
</dbReference>
<dbReference type="PDB" id="1R85">
    <property type="method" value="X-ray"/>
    <property type="resolution" value="1.45 A"/>
    <property type="chains" value="A=29-407"/>
</dbReference>
<dbReference type="PDB" id="1R86">
    <property type="method" value="X-ray"/>
    <property type="resolution" value="1.80 A"/>
    <property type="chains" value="A=29-407"/>
</dbReference>
<dbReference type="PDB" id="1R87">
    <property type="method" value="X-ray"/>
    <property type="resolution" value="1.67 A"/>
    <property type="chains" value="A=29-407"/>
</dbReference>
<dbReference type="PDB" id="3MMD">
    <property type="method" value="X-ray"/>
    <property type="resolution" value="1.70 A"/>
    <property type="chains" value="A=29-407"/>
</dbReference>
<dbReference type="PDB" id="4PRW">
    <property type="method" value="X-ray"/>
    <property type="resolution" value="1.80 A"/>
    <property type="chains" value="A=29-407"/>
</dbReference>
<dbReference type="PDB" id="4PUD">
    <property type="method" value="X-ray"/>
    <property type="resolution" value="2.01 A"/>
    <property type="chains" value="A=37-407"/>
</dbReference>
<dbReference type="PDB" id="4PUE">
    <property type="method" value="X-ray"/>
    <property type="resolution" value="2.20 A"/>
    <property type="chains" value="A=37-407"/>
</dbReference>
<dbReference type="PDBsum" id="1HIZ"/>
<dbReference type="PDBsum" id="1R85"/>
<dbReference type="PDBsum" id="1R86"/>
<dbReference type="PDBsum" id="1R87"/>
<dbReference type="PDBsum" id="3MMD"/>
<dbReference type="PDBsum" id="4PRW"/>
<dbReference type="PDBsum" id="4PUD"/>
<dbReference type="PDBsum" id="4PUE"/>
<dbReference type="SMR" id="P40943"/>
<dbReference type="DrugBank" id="DB03389">
    <property type="generic name" value="alpha-D-Xylopyranose"/>
</dbReference>
<dbReference type="DrugBank" id="DB02379">
    <property type="generic name" value="Beta-D-Glucose"/>
</dbReference>
<dbReference type="CAZy" id="GH10">
    <property type="family name" value="Glycoside Hydrolase Family 10"/>
</dbReference>
<dbReference type="SABIO-RK" id="P40943"/>
<dbReference type="UniPathway" id="UPA00114"/>
<dbReference type="EvolutionaryTrace" id="P40943"/>
<dbReference type="GO" id="GO:0005576">
    <property type="term" value="C:extracellular region"/>
    <property type="evidence" value="ECO:0007669"/>
    <property type="project" value="UniProtKB-SubCell"/>
</dbReference>
<dbReference type="GO" id="GO:0031176">
    <property type="term" value="F:endo-1,4-beta-xylanase activity"/>
    <property type="evidence" value="ECO:0007669"/>
    <property type="project" value="UniProtKB-EC"/>
</dbReference>
<dbReference type="GO" id="GO:0045493">
    <property type="term" value="P:xylan catabolic process"/>
    <property type="evidence" value="ECO:0007669"/>
    <property type="project" value="UniProtKB-UniPathway"/>
</dbReference>
<dbReference type="Gene3D" id="3.20.20.80">
    <property type="entry name" value="Glycosidases"/>
    <property type="match status" value="1"/>
</dbReference>
<dbReference type="InterPro" id="IPR044846">
    <property type="entry name" value="GH10"/>
</dbReference>
<dbReference type="InterPro" id="IPR031158">
    <property type="entry name" value="GH10_AS"/>
</dbReference>
<dbReference type="InterPro" id="IPR001000">
    <property type="entry name" value="GH10_dom"/>
</dbReference>
<dbReference type="InterPro" id="IPR017853">
    <property type="entry name" value="Glycoside_hydrolase_SF"/>
</dbReference>
<dbReference type="PANTHER" id="PTHR31490:SF90">
    <property type="entry name" value="ENDO-1,4-BETA-XYLANASE A"/>
    <property type="match status" value="1"/>
</dbReference>
<dbReference type="PANTHER" id="PTHR31490">
    <property type="entry name" value="GLYCOSYL HYDROLASE"/>
    <property type="match status" value="1"/>
</dbReference>
<dbReference type="Pfam" id="PF00331">
    <property type="entry name" value="Glyco_hydro_10"/>
    <property type="match status" value="1"/>
</dbReference>
<dbReference type="PRINTS" id="PR00134">
    <property type="entry name" value="GLHYDRLASE10"/>
</dbReference>
<dbReference type="SMART" id="SM00633">
    <property type="entry name" value="Glyco_10"/>
    <property type="match status" value="1"/>
</dbReference>
<dbReference type="SUPFAM" id="SSF51445">
    <property type="entry name" value="(Trans)glycosidases"/>
    <property type="match status" value="1"/>
</dbReference>
<dbReference type="PROSITE" id="PS00591">
    <property type="entry name" value="GH10_1"/>
    <property type="match status" value="1"/>
</dbReference>
<dbReference type="PROSITE" id="PS51760">
    <property type="entry name" value="GH10_2"/>
    <property type="match status" value="1"/>
</dbReference>
<feature type="signal peptide" evidence="4">
    <location>
        <begin position="1"/>
        <end position="28"/>
    </location>
</feature>
<feature type="chain" id="PRO_0000007968" description="Endo-1,4-beta-xylanase">
    <location>
        <begin position="29"/>
        <end position="407"/>
    </location>
</feature>
<feature type="domain" description="GH10" evidence="2">
    <location>
        <begin position="42"/>
        <end position="406"/>
    </location>
</feature>
<feature type="active site" description="Proton donor" evidence="1">
    <location>
        <position position="187"/>
    </location>
</feature>
<feature type="active site" description="Nucleophile" evidence="3">
    <location>
        <position position="293"/>
    </location>
</feature>
<feature type="turn" evidence="6">
    <location>
        <begin position="34"/>
        <end position="36"/>
    </location>
</feature>
<feature type="helix" evidence="7">
    <location>
        <begin position="42"/>
        <end position="44"/>
    </location>
</feature>
<feature type="helix" evidence="7">
    <location>
        <begin position="48"/>
        <end position="52"/>
    </location>
</feature>
<feature type="turn" evidence="7">
    <location>
        <begin position="53"/>
        <end position="55"/>
    </location>
</feature>
<feature type="strand" evidence="7">
    <location>
        <begin position="57"/>
        <end position="62"/>
    </location>
</feature>
<feature type="helix" evidence="7">
    <location>
        <begin position="64"/>
        <end position="68"/>
    </location>
</feature>
<feature type="helix" evidence="7">
    <location>
        <begin position="70"/>
        <end position="79"/>
    </location>
</feature>
<feature type="strand" evidence="7">
    <location>
        <begin position="81"/>
        <end position="87"/>
    </location>
</feature>
<feature type="helix" evidence="7">
    <location>
        <begin position="91"/>
        <end position="94"/>
    </location>
</feature>
<feature type="helix" evidence="7">
    <location>
        <begin position="104"/>
        <end position="115"/>
    </location>
</feature>
<feature type="strand" evidence="7">
    <location>
        <begin position="119"/>
        <end position="123"/>
    </location>
</feature>
<feature type="strand" evidence="8">
    <location>
        <begin position="128"/>
        <end position="130"/>
    </location>
</feature>
<feature type="helix" evidence="7">
    <location>
        <begin position="133"/>
        <end position="136"/>
    </location>
</feature>
<feature type="strand" evidence="7">
    <location>
        <begin position="141"/>
        <end position="143"/>
    </location>
</feature>
<feature type="helix" evidence="7">
    <location>
        <begin position="144"/>
        <end position="146"/>
    </location>
</feature>
<feature type="helix" evidence="7">
    <location>
        <begin position="150"/>
        <end position="175"/>
    </location>
</feature>
<feature type="turn" evidence="7">
    <location>
        <begin position="176"/>
        <end position="178"/>
    </location>
</feature>
<feature type="strand" evidence="7">
    <location>
        <begin position="181"/>
        <end position="187"/>
    </location>
</feature>
<feature type="strand" evidence="7">
    <location>
        <begin position="193"/>
        <end position="195"/>
    </location>
</feature>
<feature type="helix" evidence="7">
    <location>
        <begin position="199"/>
        <end position="204"/>
    </location>
</feature>
<feature type="helix" evidence="7">
    <location>
        <begin position="207"/>
        <end position="220"/>
    </location>
</feature>
<feature type="strand" evidence="7">
    <location>
        <begin position="224"/>
        <end position="231"/>
    </location>
</feature>
<feature type="helix" evidence="7">
    <location>
        <begin position="238"/>
        <end position="251"/>
    </location>
</feature>
<feature type="strand" evidence="7">
    <location>
        <begin position="258"/>
        <end position="261"/>
    </location>
</feature>
<feature type="strand" evidence="7">
    <location>
        <begin position="267"/>
        <end position="270"/>
    </location>
</feature>
<feature type="helix" evidence="7">
    <location>
        <begin position="272"/>
        <end position="284"/>
    </location>
</feature>
<feature type="strand" evidence="7">
    <location>
        <begin position="288"/>
        <end position="296"/>
    </location>
</feature>
<feature type="strand" evidence="8">
    <location>
        <begin position="306"/>
        <end position="308"/>
    </location>
</feature>
<feature type="helix" evidence="7">
    <location>
        <begin position="309"/>
        <end position="311"/>
    </location>
</feature>
<feature type="helix" evidence="7">
    <location>
        <begin position="314"/>
        <end position="333"/>
    </location>
</feature>
<feature type="helix" evidence="7">
    <location>
        <begin position="335"/>
        <end position="337"/>
    </location>
</feature>
<feature type="strand" evidence="7">
    <location>
        <begin position="338"/>
        <end position="347"/>
    </location>
</feature>
<feature type="helix" evidence="7">
    <location>
        <begin position="352"/>
        <end position="356"/>
    </location>
</feature>
<feature type="strand" evidence="7">
    <location>
        <begin position="359"/>
        <end position="361"/>
    </location>
</feature>
<feature type="strand" evidence="7">
    <location>
        <begin position="376"/>
        <end position="379"/>
    </location>
</feature>
<feature type="strand" evidence="7">
    <location>
        <begin position="388"/>
        <end position="390"/>
    </location>
</feature>
<feature type="strand" evidence="7">
    <location>
        <begin position="394"/>
        <end position="396"/>
    </location>
</feature>
<feature type="helix" evidence="7">
    <location>
        <begin position="398"/>
        <end position="404"/>
    </location>
</feature>
<reference key="1">
    <citation type="journal article" date="1994" name="Appl. Environ. Microbiol.">
        <title>Cloning and DNA sequence of the gene coding for Bacillus stearothermophilus T-6 xylanase.</title>
        <authorList>
            <person name="Gat O."/>
            <person name="Lapidot A."/>
            <person name="Alchanati I."/>
            <person name="Regueros C."/>
            <person name="Shoham Y."/>
        </authorList>
    </citation>
    <scope>NUCLEOTIDE SEQUENCE [GENOMIC DNA]</scope>
    <scope>PARTIAL PROTEIN SEQUENCE</scope>
    <source>
        <strain>T-6 / NCIMB 40221</strain>
    </source>
</reference>
<reference key="2">
    <citation type="journal article" date="1993" name="Appl. Environ. Microbiol.">
        <title>Purification and characterization of a thermostable xylanase from Bacillus stearothermophilus T-6.</title>
        <authorList>
            <person name="Khasin A."/>
            <person name="Alchanati I."/>
            <person name="Shoham Y."/>
        </authorList>
    </citation>
    <scope>PROTEIN SEQUENCE OF 29-73</scope>
    <source>
        <strain>T-6</strain>
    </source>
</reference>
<sequence length="407" mass="46763">MRNVVRKPLTIGLALTLLLPMGMTATSAKNADSYAKKPHISALNAPQLDQRYKNEFTIGAAVEPYQLQNEKDVQMLKRHFNSIVAENVMKPISIQPEEGKFNFEQADRIVKFAKANGMDIRFHTLVWHSQVPQWFFLDKEGKPMVNETDPVKREQNKQLLLKRLETHIKTIVERYKDDIKYWDVVNEVVGDDGKLRNSPWYQIAGIDYIKVAFQAARKYGGDNIKLYMNDYNTEVEPKRTALYNLVKQLKEEGVPIDGIGHQSHIQIGWPSEAEIEKTINMFAALGLDNQITELDVSMYGWPPRAYPTYDAIPKQKFLDQAARYDRLFKLYEKLSDKISNVTFWGIADNHTWLDSRADVYYDANGNVVVDPNAPYAKVEKGKGKDAPFVFGPDYKVKPAYWAIIDHK</sequence>
<protein>
    <recommendedName>
        <fullName>Endo-1,4-beta-xylanase</fullName>
        <shortName>Xylanase</shortName>
        <ecNumber>3.2.1.8</ecNumber>
    </recommendedName>
    <alternativeName>
        <fullName>1,4-beta-D-xylan xylanohydrolase</fullName>
    </alternativeName>
</protein>
<proteinExistence type="evidence at protein level"/>
<organism>
    <name type="scientific">Geobacillus stearothermophilus</name>
    <name type="common">Bacillus stearothermophilus</name>
    <dbReference type="NCBI Taxonomy" id="1422"/>
    <lineage>
        <taxon>Bacteria</taxon>
        <taxon>Bacillati</taxon>
        <taxon>Bacillota</taxon>
        <taxon>Bacilli</taxon>
        <taxon>Bacillales</taxon>
        <taxon>Anoxybacillaceae</taxon>
        <taxon>Geobacillus</taxon>
    </lineage>
</organism>
<comment type="catalytic activity">
    <reaction>
        <text>Endohydrolysis of (1-&gt;4)-beta-D-xylosidic linkages in xylans.</text>
        <dbReference type="EC" id="3.2.1.8"/>
    </reaction>
</comment>
<comment type="pathway">
    <text>Glycan degradation; xylan degradation.</text>
</comment>
<comment type="subcellular location">
    <subcellularLocation>
        <location>Secreted</location>
    </subcellularLocation>
</comment>
<comment type="induction">
    <text>By xylose.</text>
</comment>
<comment type="similarity">
    <text evidence="5">Belongs to the glycosyl hydrolase 10 (cellulase F) family.</text>
</comment>
<comment type="sequence caution" evidence="5">
    <conflict type="erroneous initiation">
        <sequence resource="EMBL-CDS" id="ABI49951"/>
    </conflict>
</comment>
<name>XYN1_GEOSE</name>
<evidence type="ECO:0000250" key="1"/>
<evidence type="ECO:0000255" key="2">
    <source>
        <dbReference type="PROSITE-ProRule" id="PRU01096"/>
    </source>
</evidence>
<evidence type="ECO:0000255" key="3">
    <source>
        <dbReference type="PROSITE-ProRule" id="PRU10061"/>
    </source>
</evidence>
<evidence type="ECO:0000269" key="4">
    <source>
    </source>
</evidence>
<evidence type="ECO:0000305" key="5"/>
<evidence type="ECO:0007829" key="6">
    <source>
        <dbReference type="PDB" id="1HIZ"/>
    </source>
</evidence>
<evidence type="ECO:0007829" key="7">
    <source>
        <dbReference type="PDB" id="1R85"/>
    </source>
</evidence>
<evidence type="ECO:0007829" key="8">
    <source>
        <dbReference type="PDB" id="1R87"/>
    </source>
</evidence>
<accession>P40943</accession>
<accession>Q09LX3</accession>
<keyword id="KW-0002">3D-structure</keyword>
<keyword id="KW-0119">Carbohydrate metabolism</keyword>
<keyword id="KW-0903">Direct protein sequencing</keyword>
<keyword id="KW-0326">Glycosidase</keyword>
<keyword id="KW-0378">Hydrolase</keyword>
<keyword id="KW-0624">Polysaccharide degradation</keyword>
<keyword id="KW-0964">Secreted</keyword>
<keyword id="KW-0732">Signal</keyword>
<keyword id="KW-0858">Xylan degradation</keyword>